<gene>
    <name evidence="1" type="primary">rpsL</name>
    <name type="ordered locus">lin2805</name>
</gene>
<name>RS12_LISIN</name>
<evidence type="ECO:0000255" key="1">
    <source>
        <dbReference type="HAMAP-Rule" id="MF_00403"/>
    </source>
</evidence>
<evidence type="ECO:0000256" key="2">
    <source>
        <dbReference type="SAM" id="MobiDB-lite"/>
    </source>
</evidence>
<evidence type="ECO:0000305" key="3"/>
<accession>P66373</accession>
<accession>Q927I3</accession>
<protein>
    <recommendedName>
        <fullName evidence="1">Small ribosomal subunit protein uS12</fullName>
    </recommendedName>
    <alternativeName>
        <fullName evidence="3">30S ribosomal protein S12</fullName>
    </alternativeName>
</protein>
<sequence>MPTINQLVRKPRQSKIKKSTSPALNKGLNSFKRELTDVNSPQKRGVCTRVGTMTPKKPNSALRKYARVRLSNGIEVTAYIPGIGHNLQEHSVVLIRGGRVKDLPGVRYHIVRGALDTAGVENRGQSRSKYGTKKPKK</sequence>
<organism>
    <name type="scientific">Listeria innocua serovar 6a (strain ATCC BAA-680 / CLIP 11262)</name>
    <dbReference type="NCBI Taxonomy" id="272626"/>
    <lineage>
        <taxon>Bacteria</taxon>
        <taxon>Bacillati</taxon>
        <taxon>Bacillota</taxon>
        <taxon>Bacilli</taxon>
        <taxon>Bacillales</taxon>
        <taxon>Listeriaceae</taxon>
        <taxon>Listeria</taxon>
    </lineage>
</organism>
<dbReference type="EMBL" id="AL596173">
    <property type="protein sequence ID" value="CAC98031.1"/>
    <property type="molecule type" value="Genomic_DNA"/>
</dbReference>
<dbReference type="PIR" id="AG1782">
    <property type="entry name" value="AG1782"/>
</dbReference>
<dbReference type="RefSeq" id="WP_003720973.1">
    <property type="nucleotide sequence ID" value="NC_003212.1"/>
</dbReference>
<dbReference type="SMR" id="P66373"/>
<dbReference type="STRING" id="272626.gene:17567192"/>
<dbReference type="GeneID" id="93240543"/>
<dbReference type="KEGG" id="lin:rpsL"/>
<dbReference type="eggNOG" id="COG0048">
    <property type="taxonomic scope" value="Bacteria"/>
</dbReference>
<dbReference type="HOGENOM" id="CLU_104295_1_2_9"/>
<dbReference type="OrthoDB" id="9802366at2"/>
<dbReference type="Proteomes" id="UP000002513">
    <property type="component" value="Chromosome"/>
</dbReference>
<dbReference type="GO" id="GO:0015935">
    <property type="term" value="C:small ribosomal subunit"/>
    <property type="evidence" value="ECO:0007669"/>
    <property type="project" value="InterPro"/>
</dbReference>
<dbReference type="GO" id="GO:0019843">
    <property type="term" value="F:rRNA binding"/>
    <property type="evidence" value="ECO:0007669"/>
    <property type="project" value="UniProtKB-UniRule"/>
</dbReference>
<dbReference type="GO" id="GO:0003735">
    <property type="term" value="F:structural constituent of ribosome"/>
    <property type="evidence" value="ECO:0007669"/>
    <property type="project" value="InterPro"/>
</dbReference>
<dbReference type="GO" id="GO:0000049">
    <property type="term" value="F:tRNA binding"/>
    <property type="evidence" value="ECO:0007669"/>
    <property type="project" value="UniProtKB-UniRule"/>
</dbReference>
<dbReference type="GO" id="GO:0006412">
    <property type="term" value="P:translation"/>
    <property type="evidence" value="ECO:0007669"/>
    <property type="project" value="UniProtKB-UniRule"/>
</dbReference>
<dbReference type="CDD" id="cd03368">
    <property type="entry name" value="Ribosomal_S12"/>
    <property type="match status" value="1"/>
</dbReference>
<dbReference type="FunFam" id="2.40.50.140:FF:000001">
    <property type="entry name" value="30S ribosomal protein S12"/>
    <property type="match status" value="1"/>
</dbReference>
<dbReference type="Gene3D" id="2.40.50.140">
    <property type="entry name" value="Nucleic acid-binding proteins"/>
    <property type="match status" value="1"/>
</dbReference>
<dbReference type="HAMAP" id="MF_00403_B">
    <property type="entry name" value="Ribosomal_uS12_B"/>
    <property type="match status" value="1"/>
</dbReference>
<dbReference type="InterPro" id="IPR012340">
    <property type="entry name" value="NA-bd_OB-fold"/>
</dbReference>
<dbReference type="InterPro" id="IPR006032">
    <property type="entry name" value="Ribosomal_uS12"/>
</dbReference>
<dbReference type="InterPro" id="IPR005679">
    <property type="entry name" value="Ribosomal_uS12_bac"/>
</dbReference>
<dbReference type="NCBIfam" id="TIGR00981">
    <property type="entry name" value="rpsL_bact"/>
    <property type="match status" value="1"/>
</dbReference>
<dbReference type="PANTHER" id="PTHR11652">
    <property type="entry name" value="30S RIBOSOMAL PROTEIN S12 FAMILY MEMBER"/>
    <property type="match status" value="1"/>
</dbReference>
<dbReference type="Pfam" id="PF00164">
    <property type="entry name" value="Ribosom_S12_S23"/>
    <property type="match status" value="1"/>
</dbReference>
<dbReference type="PIRSF" id="PIRSF002133">
    <property type="entry name" value="Ribosomal_S12/S23"/>
    <property type="match status" value="1"/>
</dbReference>
<dbReference type="PRINTS" id="PR01034">
    <property type="entry name" value="RIBOSOMALS12"/>
</dbReference>
<dbReference type="SUPFAM" id="SSF50249">
    <property type="entry name" value="Nucleic acid-binding proteins"/>
    <property type="match status" value="1"/>
</dbReference>
<dbReference type="PROSITE" id="PS00055">
    <property type="entry name" value="RIBOSOMAL_S12"/>
    <property type="match status" value="1"/>
</dbReference>
<reference key="1">
    <citation type="journal article" date="2001" name="Science">
        <title>Comparative genomics of Listeria species.</title>
        <authorList>
            <person name="Glaser P."/>
            <person name="Frangeul L."/>
            <person name="Buchrieser C."/>
            <person name="Rusniok C."/>
            <person name="Amend A."/>
            <person name="Baquero F."/>
            <person name="Berche P."/>
            <person name="Bloecker H."/>
            <person name="Brandt P."/>
            <person name="Chakraborty T."/>
            <person name="Charbit A."/>
            <person name="Chetouani F."/>
            <person name="Couve E."/>
            <person name="de Daruvar A."/>
            <person name="Dehoux P."/>
            <person name="Domann E."/>
            <person name="Dominguez-Bernal G."/>
            <person name="Duchaud E."/>
            <person name="Durant L."/>
            <person name="Dussurget O."/>
            <person name="Entian K.-D."/>
            <person name="Fsihi H."/>
            <person name="Garcia-del Portillo F."/>
            <person name="Garrido P."/>
            <person name="Gautier L."/>
            <person name="Goebel W."/>
            <person name="Gomez-Lopez N."/>
            <person name="Hain T."/>
            <person name="Hauf J."/>
            <person name="Jackson D."/>
            <person name="Jones L.-M."/>
            <person name="Kaerst U."/>
            <person name="Kreft J."/>
            <person name="Kuhn M."/>
            <person name="Kunst F."/>
            <person name="Kurapkat G."/>
            <person name="Madueno E."/>
            <person name="Maitournam A."/>
            <person name="Mata Vicente J."/>
            <person name="Ng E."/>
            <person name="Nedjari H."/>
            <person name="Nordsiek G."/>
            <person name="Novella S."/>
            <person name="de Pablos B."/>
            <person name="Perez-Diaz J.-C."/>
            <person name="Purcell R."/>
            <person name="Remmel B."/>
            <person name="Rose M."/>
            <person name="Schlueter T."/>
            <person name="Simoes N."/>
            <person name="Tierrez A."/>
            <person name="Vazquez-Boland J.-A."/>
            <person name="Voss H."/>
            <person name="Wehland J."/>
            <person name="Cossart P."/>
        </authorList>
    </citation>
    <scope>NUCLEOTIDE SEQUENCE [LARGE SCALE GENOMIC DNA]</scope>
    <source>
        <strain>ATCC BAA-680 / CLIP 11262</strain>
    </source>
</reference>
<comment type="function">
    <text evidence="1">With S4 and S5 plays an important role in translational accuracy.</text>
</comment>
<comment type="function">
    <text evidence="1">Interacts with and stabilizes bases of the 16S rRNA that are involved in tRNA selection in the A site and with the mRNA backbone. Located at the interface of the 30S and 50S subunits, it traverses the body of the 30S subunit contacting proteins on the other side and probably holding the rRNA structure together. The combined cluster of proteins S8, S12 and S17 appears to hold together the shoulder and platform of the 30S subunit.</text>
</comment>
<comment type="subunit">
    <text evidence="1">Part of the 30S ribosomal subunit. Contacts proteins S8 and S17. May interact with IF1 in the 30S initiation complex.</text>
</comment>
<comment type="similarity">
    <text evidence="1">Belongs to the universal ribosomal protein uS12 family.</text>
</comment>
<comment type="caution">
    <text evidence="3">Because the enzyme that would modify Asp-102 to 3-methylthioaspartic acid has not been found in the proteome of this organism, that modification is not predicted.</text>
</comment>
<proteinExistence type="inferred from homology"/>
<keyword id="KW-0687">Ribonucleoprotein</keyword>
<keyword id="KW-0689">Ribosomal protein</keyword>
<keyword id="KW-0694">RNA-binding</keyword>
<keyword id="KW-0699">rRNA-binding</keyword>
<keyword id="KW-0820">tRNA-binding</keyword>
<feature type="chain" id="PRO_0000146251" description="Small ribosomal subunit protein uS12">
    <location>
        <begin position="1"/>
        <end position="137"/>
    </location>
</feature>
<feature type="region of interest" description="Disordered" evidence="2">
    <location>
        <begin position="1"/>
        <end position="26"/>
    </location>
</feature>
<feature type="compositionally biased region" description="Basic residues" evidence="2">
    <location>
        <begin position="9"/>
        <end position="18"/>
    </location>
</feature>